<comment type="function">
    <text evidence="1">Antimicrobial peptide.</text>
</comment>
<comment type="subcellular location">
    <subcellularLocation>
        <location evidence="2">Secreted</location>
    </subcellularLocation>
</comment>
<comment type="tissue specificity">
    <text evidence="5">Expressed by the skin glands.</text>
</comment>
<comment type="mass spectrometry"/>
<comment type="similarity">
    <text evidence="4">Belongs to the frog skin active peptide (FSAP) family. Brevinin subfamily.</text>
</comment>
<name>BR2H_PELRI</name>
<evidence type="ECO:0000250" key="1">
    <source>
        <dbReference type="UniProtKB" id="P0C8S9"/>
    </source>
</evidence>
<evidence type="ECO:0000269" key="2">
    <source>
    </source>
</evidence>
<evidence type="ECO:0000303" key="3">
    <source>
    </source>
</evidence>
<evidence type="ECO:0000305" key="4"/>
<evidence type="ECO:0000305" key="5">
    <source>
    </source>
</evidence>
<feature type="peptide" id="PRO_0000442762" description="Brevinin-2Rh" evidence="2">
    <location>
        <begin position="1"/>
        <end position="33"/>
    </location>
</feature>
<feature type="disulfide bond" evidence="2">
    <location>
        <begin position="27"/>
        <end position="33"/>
    </location>
</feature>
<sequence>GIMDTLKNLAKTAGKGALQSLLKMASCKLSGQC</sequence>
<accession>C0HL03</accession>
<protein>
    <recommendedName>
        <fullName evidence="3">Brevinin-2Rh</fullName>
    </recommendedName>
</protein>
<keyword id="KW-0929">Antimicrobial</keyword>
<keyword id="KW-0903">Direct protein sequencing</keyword>
<keyword id="KW-1015">Disulfide bond</keyword>
<keyword id="KW-0964">Secreted</keyword>
<organism>
    <name type="scientific">Pelophylax ridibundus</name>
    <name type="common">Marsh frog</name>
    <name type="synonym">Rana ridibunda</name>
    <dbReference type="NCBI Taxonomy" id="8406"/>
    <lineage>
        <taxon>Eukaryota</taxon>
        <taxon>Metazoa</taxon>
        <taxon>Chordata</taxon>
        <taxon>Craniata</taxon>
        <taxon>Vertebrata</taxon>
        <taxon>Euteleostomi</taxon>
        <taxon>Amphibia</taxon>
        <taxon>Batrachia</taxon>
        <taxon>Anura</taxon>
        <taxon>Neobatrachia</taxon>
        <taxon>Ranoidea</taxon>
        <taxon>Ranidae</taxon>
        <taxon>Pelophylax</taxon>
    </lineage>
</organism>
<reference evidence="4" key="1">
    <citation type="journal article" date="2017" name="Anal. Bioanal. Chem.">
        <title>Differentiation of frogs from two populations belonging to the Pelophylax esculentus complex by LC-MS/MS comparison of their skin peptidomes.</title>
        <authorList>
            <person name="Samgina T.Y."/>
            <person name="Artemenko K.A."/>
            <person name="Bergquist J."/>
            <person name="Trebse P."/>
            <person name="Torkar G."/>
            <person name="Tolpina M.D."/>
            <person name="Lebedev A.T."/>
        </authorList>
    </citation>
    <scope>PROTEIN SEQUENCE</scope>
    <scope>SUBCELLULAR LOCATION</scope>
    <scope>MASS SPECTROMETRY</scope>
    <scope>IDENTIFICATION BY MASS SPECTROMETRY</scope>
    <source>
        <tissue evidence="3">Skin secretion</tissue>
    </source>
</reference>
<dbReference type="SMR" id="C0HL03"/>
<dbReference type="GO" id="GO:0005576">
    <property type="term" value="C:extracellular region"/>
    <property type="evidence" value="ECO:0000314"/>
    <property type="project" value="UniProtKB"/>
</dbReference>
<dbReference type="GO" id="GO:0006952">
    <property type="term" value="P:defense response"/>
    <property type="evidence" value="ECO:0007669"/>
    <property type="project" value="InterPro"/>
</dbReference>
<dbReference type="InterPro" id="IPR012521">
    <property type="entry name" value="Antimicrobial_frog_2"/>
</dbReference>
<dbReference type="Pfam" id="PF08023">
    <property type="entry name" value="Antimicrobial_2"/>
    <property type="match status" value="1"/>
</dbReference>
<proteinExistence type="evidence at protein level"/>